<evidence type="ECO:0000250" key="1"/>
<evidence type="ECO:0000305" key="2"/>
<organism>
    <name type="scientific">Buchnera aphidicola subsp. Schizaphis graminum (strain Sg)</name>
    <dbReference type="NCBI Taxonomy" id="198804"/>
    <lineage>
        <taxon>Bacteria</taxon>
        <taxon>Pseudomonadati</taxon>
        <taxon>Pseudomonadota</taxon>
        <taxon>Gammaproteobacteria</taxon>
        <taxon>Enterobacterales</taxon>
        <taxon>Erwiniaceae</taxon>
        <taxon>Buchnera</taxon>
    </lineage>
</organism>
<gene>
    <name type="primary">ilvI</name>
    <name type="ordered locus">BUsg_220</name>
</gene>
<accession>O85293</accession>
<protein>
    <recommendedName>
        <fullName>Acetolactate synthase large subunit</fullName>
        <shortName>AHAS</shortName>
        <ecNumber>2.2.1.6</ecNumber>
    </recommendedName>
    <alternativeName>
        <fullName>Acetohydroxy-acid synthase large subunit</fullName>
        <shortName>ALS</shortName>
    </alternativeName>
</protein>
<comment type="catalytic activity">
    <reaction>
        <text>2 pyruvate + H(+) = (2S)-2-acetolactate + CO2</text>
        <dbReference type="Rhea" id="RHEA:25249"/>
        <dbReference type="ChEBI" id="CHEBI:15361"/>
        <dbReference type="ChEBI" id="CHEBI:15378"/>
        <dbReference type="ChEBI" id="CHEBI:16526"/>
        <dbReference type="ChEBI" id="CHEBI:58476"/>
        <dbReference type="EC" id="2.2.1.6"/>
    </reaction>
</comment>
<comment type="cofactor">
    <cofactor evidence="1">
        <name>Mg(2+)</name>
        <dbReference type="ChEBI" id="CHEBI:18420"/>
    </cofactor>
    <text evidence="1">Binds 1 Mg(2+) ion per subunit.</text>
</comment>
<comment type="cofactor">
    <cofactor evidence="1">
        <name>thiamine diphosphate</name>
        <dbReference type="ChEBI" id="CHEBI:58937"/>
    </cofactor>
    <text evidence="1">Binds 1 thiamine pyrophosphate per subunit.</text>
</comment>
<comment type="pathway">
    <text>Amino-acid biosynthesis; L-isoleucine biosynthesis; L-isoleucine from 2-oxobutanoate: step 1/4.</text>
</comment>
<comment type="pathway">
    <text>Amino-acid biosynthesis; L-valine biosynthesis; L-valine from pyruvate: step 1/4.</text>
</comment>
<comment type="subunit">
    <text evidence="1">Dimer of large and small chains.</text>
</comment>
<comment type="miscellaneous">
    <text evidence="1">Contains 1 molecule of FAD per monomer. The role of this cofactor is not clear considering that the reaction does not involve redox chemistry (By similarity).</text>
</comment>
<comment type="similarity">
    <text evidence="2">Belongs to the TPP enzyme family.</text>
</comment>
<keyword id="KW-0028">Amino-acid biosynthesis</keyword>
<keyword id="KW-0100">Branched-chain amino acid biosynthesis</keyword>
<keyword id="KW-0274">FAD</keyword>
<keyword id="KW-0285">Flavoprotein</keyword>
<keyword id="KW-0460">Magnesium</keyword>
<keyword id="KW-0479">Metal-binding</keyword>
<keyword id="KW-0786">Thiamine pyrophosphate</keyword>
<keyword id="KW-0808">Transferase</keyword>
<proteinExistence type="inferred from homology"/>
<sequence>MEILSGAEMVIRSLINQGIQHIFGYPGGAVLDIYDALKTVGGVEHILVRHEQAATHMADGYARSTGKIGVVLVTSGPGATNAITGIATAYMDSIPMVVISGQVASSLIGYDAFQECDMIGISRPIVKHSFLVKRTEDIPIIFKKAFWLASTGRPGPVVIDLPKDILKKTNKYNFIWPKNIHIRSYNPTTKGHQGQIKKALRILLKAKKPIIYAGGGIISSNSSEELRIFAEKINCPVTTSLMGLGAFPGNHIQSISMLGMHGTYEANMAMHYSDVIFAIGVRFDDRTTNNLKKYCPNATILHVDIDPTSISKTVSADIPIVGDAKQVLKEMIELIKKEKQIHSLKEWWSSIGKWKKIKSLEYNKKSNKIKPQKIIQTLFKLTKGTSYITSDVGQHQMFTALYYQFNKPRRWINSGGLGTMGFGLPAALGVKLALPKATVICVTGDGSIQMNIQELSTARQYNLAVLILNLNNSSLGMVKQWQDMIYSGRHSHSYMDSLPDFVKLVESYGHIGLKVKTNEELEEKLILALKKLSEGNLVFLDIQIDDSEHVYPMQIQGGGMNEMWLRKKEVS</sequence>
<dbReference type="EC" id="2.2.1.6"/>
<dbReference type="EMBL" id="AF060492">
    <property type="protein sequence ID" value="AAC32333.1"/>
    <property type="molecule type" value="Genomic_DNA"/>
</dbReference>
<dbReference type="EMBL" id="AE013218">
    <property type="protein sequence ID" value="AAM67780.1"/>
    <property type="molecule type" value="Genomic_DNA"/>
</dbReference>
<dbReference type="RefSeq" id="WP_011053747.1">
    <property type="nucleotide sequence ID" value="NC_004061.1"/>
</dbReference>
<dbReference type="SMR" id="O85293"/>
<dbReference type="STRING" id="198804.BUsg_220"/>
<dbReference type="GeneID" id="93003686"/>
<dbReference type="KEGG" id="bas:BUsg_220"/>
<dbReference type="eggNOG" id="COG0028">
    <property type="taxonomic scope" value="Bacteria"/>
</dbReference>
<dbReference type="HOGENOM" id="CLU_013748_1_2_6"/>
<dbReference type="UniPathway" id="UPA00047">
    <property type="reaction ID" value="UER00055"/>
</dbReference>
<dbReference type="UniPathway" id="UPA00049">
    <property type="reaction ID" value="UER00059"/>
</dbReference>
<dbReference type="Proteomes" id="UP000000416">
    <property type="component" value="Chromosome"/>
</dbReference>
<dbReference type="GO" id="GO:0005948">
    <property type="term" value="C:acetolactate synthase complex"/>
    <property type="evidence" value="ECO:0007669"/>
    <property type="project" value="TreeGrafter"/>
</dbReference>
<dbReference type="GO" id="GO:0003984">
    <property type="term" value="F:acetolactate synthase activity"/>
    <property type="evidence" value="ECO:0007669"/>
    <property type="project" value="UniProtKB-EC"/>
</dbReference>
<dbReference type="GO" id="GO:0050660">
    <property type="term" value="F:flavin adenine dinucleotide binding"/>
    <property type="evidence" value="ECO:0007669"/>
    <property type="project" value="InterPro"/>
</dbReference>
<dbReference type="GO" id="GO:0000287">
    <property type="term" value="F:magnesium ion binding"/>
    <property type="evidence" value="ECO:0007669"/>
    <property type="project" value="InterPro"/>
</dbReference>
<dbReference type="GO" id="GO:0030976">
    <property type="term" value="F:thiamine pyrophosphate binding"/>
    <property type="evidence" value="ECO:0007669"/>
    <property type="project" value="InterPro"/>
</dbReference>
<dbReference type="GO" id="GO:0009097">
    <property type="term" value="P:isoleucine biosynthetic process"/>
    <property type="evidence" value="ECO:0007669"/>
    <property type="project" value="UniProtKB-UniPathway"/>
</dbReference>
<dbReference type="GO" id="GO:0009099">
    <property type="term" value="P:L-valine biosynthetic process"/>
    <property type="evidence" value="ECO:0007669"/>
    <property type="project" value="UniProtKB-UniPathway"/>
</dbReference>
<dbReference type="CDD" id="cd02015">
    <property type="entry name" value="TPP_AHAS"/>
    <property type="match status" value="1"/>
</dbReference>
<dbReference type="CDD" id="cd07035">
    <property type="entry name" value="TPP_PYR_POX_like"/>
    <property type="match status" value="1"/>
</dbReference>
<dbReference type="FunFam" id="3.40.50.1220:FF:000008">
    <property type="entry name" value="Acetolactate synthase"/>
    <property type="match status" value="1"/>
</dbReference>
<dbReference type="FunFam" id="3.40.50.970:FF:000007">
    <property type="entry name" value="Acetolactate synthase"/>
    <property type="match status" value="1"/>
</dbReference>
<dbReference type="FunFam" id="3.40.50.970:FF:000016">
    <property type="entry name" value="Acetolactate synthase"/>
    <property type="match status" value="1"/>
</dbReference>
<dbReference type="Gene3D" id="3.40.50.970">
    <property type="match status" value="2"/>
</dbReference>
<dbReference type="Gene3D" id="3.40.50.1220">
    <property type="entry name" value="TPP-binding domain"/>
    <property type="match status" value="1"/>
</dbReference>
<dbReference type="InterPro" id="IPR012846">
    <property type="entry name" value="Acetolactate_synth_lsu"/>
</dbReference>
<dbReference type="InterPro" id="IPR039368">
    <property type="entry name" value="AHAS_TPP"/>
</dbReference>
<dbReference type="InterPro" id="IPR029035">
    <property type="entry name" value="DHS-like_NAD/FAD-binding_dom"/>
</dbReference>
<dbReference type="InterPro" id="IPR029061">
    <property type="entry name" value="THDP-binding"/>
</dbReference>
<dbReference type="InterPro" id="IPR012000">
    <property type="entry name" value="Thiamin_PyroP_enz_cen_dom"/>
</dbReference>
<dbReference type="InterPro" id="IPR012001">
    <property type="entry name" value="Thiamin_PyroP_enz_TPP-bd_dom"/>
</dbReference>
<dbReference type="InterPro" id="IPR000399">
    <property type="entry name" value="TPP-bd_CS"/>
</dbReference>
<dbReference type="InterPro" id="IPR045229">
    <property type="entry name" value="TPP_enz"/>
</dbReference>
<dbReference type="InterPro" id="IPR011766">
    <property type="entry name" value="TPP_enzyme_TPP-bd"/>
</dbReference>
<dbReference type="NCBIfam" id="TIGR00118">
    <property type="entry name" value="acolac_lg"/>
    <property type="match status" value="1"/>
</dbReference>
<dbReference type="NCBIfam" id="NF005058">
    <property type="entry name" value="PRK06466.1"/>
    <property type="match status" value="1"/>
</dbReference>
<dbReference type="PANTHER" id="PTHR18968:SF13">
    <property type="entry name" value="ACETOLACTATE SYNTHASE CATALYTIC SUBUNIT, MITOCHONDRIAL"/>
    <property type="match status" value="1"/>
</dbReference>
<dbReference type="PANTHER" id="PTHR18968">
    <property type="entry name" value="THIAMINE PYROPHOSPHATE ENZYMES"/>
    <property type="match status" value="1"/>
</dbReference>
<dbReference type="Pfam" id="PF02775">
    <property type="entry name" value="TPP_enzyme_C"/>
    <property type="match status" value="1"/>
</dbReference>
<dbReference type="Pfam" id="PF00205">
    <property type="entry name" value="TPP_enzyme_M"/>
    <property type="match status" value="1"/>
</dbReference>
<dbReference type="Pfam" id="PF02776">
    <property type="entry name" value="TPP_enzyme_N"/>
    <property type="match status" value="1"/>
</dbReference>
<dbReference type="SUPFAM" id="SSF52467">
    <property type="entry name" value="DHS-like NAD/FAD-binding domain"/>
    <property type="match status" value="1"/>
</dbReference>
<dbReference type="SUPFAM" id="SSF52518">
    <property type="entry name" value="Thiamin diphosphate-binding fold (THDP-binding)"/>
    <property type="match status" value="2"/>
</dbReference>
<dbReference type="PROSITE" id="PS00187">
    <property type="entry name" value="TPP_ENZYMES"/>
    <property type="match status" value="1"/>
</dbReference>
<reference key="1">
    <citation type="journal article" date="1998" name="Curr. Microbiol.">
        <title>Sequence analysis of a DNA fragment from Buchnera aphidicola (Aphid endosymbiont) containing the genes dapD-htrA-ilvI-ilvH-ftsL-ftsI-murE.</title>
        <authorList>
            <person name="Thao M.L."/>
            <person name="Baumann P."/>
        </authorList>
    </citation>
    <scope>NUCLEOTIDE SEQUENCE [GENOMIC DNA]</scope>
</reference>
<reference key="2">
    <citation type="journal article" date="2002" name="Science">
        <title>50 million years of genomic stasis in endosymbiotic bacteria.</title>
        <authorList>
            <person name="Tamas I."/>
            <person name="Klasson L."/>
            <person name="Canbaeck B."/>
            <person name="Naeslund A.K."/>
            <person name="Eriksson A.-S."/>
            <person name="Wernegreen J.J."/>
            <person name="Sandstroem J.P."/>
            <person name="Moran N.A."/>
            <person name="Andersson S.G.E."/>
        </authorList>
    </citation>
    <scope>NUCLEOTIDE SEQUENCE [LARGE SCALE GENOMIC DNA]</scope>
    <source>
        <strain>Sg</strain>
    </source>
</reference>
<feature type="chain" id="PRO_0000090792" description="Acetolactate synthase large subunit">
    <location>
        <begin position="1"/>
        <end position="571"/>
    </location>
</feature>
<feature type="region of interest" description="Thiamine pyrophosphate binding">
    <location>
        <begin position="394"/>
        <end position="474"/>
    </location>
</feature>
<feature type="binding site" evidence="1">
    <location>
        <position position="51"/>
    </location>
    <ligand>
        <name>thiamine diphosphate</name>
        <dbReference type="ChEBI" id="CHEBI:58937"/>
    </ligand>
</feature>
<feature type="binding site" evidence="1">
    <location>
        <position position="153"/>
    </location>
    <ligand>
        <name>FAD</name>
        <dbReference type="ChEBI" id="CHEBI:57692"/>
    </ligand>
</feature>
<feature type="binding site" evidence="1">
    <location>
        <begin position="261"/>
        <end position="282"/>
    </location>
    <ligand>
        <name>FAD</name>
        <dbReference type="ChEBI" id="CHEBI:57692"/>
    </ligand>
</feature>
<feature type="binding site" evidence="1">
    <location>
        <begin position="304"/>
        <end position="323"/>
    </location>
    <ligand>
        <name>FAD</name>
        <dbReference type="ChEBI" id="CHEBI:57692"/>
    </ligand>
</feature>
<feature type="binding site" evidence="1">
    <location>
        <position position="445"/>
    </location>
    <ligand>
        <name>Mg(2+)</name>
        <dbReference type="ChEBI" id="CHEBI:18420"/>
    </ligand>
</feature>
<feature type="binding site" evidence="1">
    <location>
        <position position="472"/>
    </location>
    <ligand>
        <name>Mg(2+)</name>
        <dbReference type="ChEBI" id="CHEBI:18420"/>
    </ligand>
</feature>
<name>ILVI_BUCAP</name>